<protein>
    <recommendedName>
        <fullName evidence="1">Adenylate kinase</fullName>
        <shortName evidence="1">AK</shortName>
        <ecNumber evidence="1">2.7.4.3</ecNumber>
    </recommendedName>
    <alternativeName>
        <fullName evidence="1">ATP-AMP transphosphorylase</fullName>
    </alternativeName>
    <alternativeName>
        <fullName evidence="1">ATP:AMP phosphotransferase</fullName>
    </alternativeName>
    <alternativeName>
        <fullName evidence="1">Adenylate monophosphate kinase</fullName>
    </alternativeName>
</protein>
<organism>
    <name type="scientific">Rhizorhabdus wittichii (strain DSM 6014 / CCUG 31198 / JCM 15750 / NBRC 105917 / EY 4224 / RW1)</name>
    <name type="common">Sphingomonas wittichii</name>
    <dbReference type="NCBI Taxonomy" id="392499"/>
    <lineage>
        <taxon>Bacteria</taxon>
        <taxon>Pseudomonadati</taxon>
        <taxon>Pseudomonadota</taxon>
        <taxon>Alphaproteobacteria</taxon>
        <taxon>Sphingomonadales</taxon>
        <taxon>Sphingomonadaceae</taxon>
        <taxon>Rhizorhabdus</taxon>
    </lineage>
</organism>
<sequence length="215" mass="22933">MNIILLGPPGAGKGTQASKLVADRGMVQLSTGDMLRAAVKAGTPIGLKAKAVMEAGELVSDEIVSGLIGEKLDSMAASEGAIFDGYPRTEAQAHSLDEILASRGRVLDHVIELEVDEDALVERITGRYTCANCGEGYHDRFKQPKVAGVCDVCGSAEFKRRPDDNEETVRTRMAEYRAKTAPILPVYEARGLVRRVDGMADMADVSAAIAAILDN</sequence>
<accession>A5V5Y1</accession>
<reference key="1">
    <citation type="journal article" date="2010" name="J. Bacteriol.">
        <title>Genome sequence of the dioxin-mineralizing bacterium Sphingomonas wittichii RW1.</title>
        <authorList>
            <person name="Miller T.R."/>
            <person name="Delcher A.L."/>
            <person name="Salzberg S.L."/>
            <person name="Saunders E."/>
            <person name="Detter J.C."/>
            <person name="Halden R.U."/>
        </authorList>
    </citation>
    <scope>NUCLEOTIDE SEQUENCE [LARGE SCALE GENOMIC DNA]</scope>
    <source>
        <strain>DSM 6014 / CCUG 31198 / JCM 15750 / NBRC 105917 / EY 4224 / RW1</strain>
    </source>
</reference>
<gene>
    <name evidence="1" type="primary">adk</name>
    <name type="ordered locus">Swit_1332</name>
</gene>
<proteinExistence type="inferred from homology"/>
<comment type="function">
    <text evidence="1">Catalyzes the reversible transfer of the terminal phosphate group between ATP and AMP. Plays an important role in cellular energy homeostasis and in adenine nucleotide metabolism.</text>
</comment>
<comment type="catalytic activity">
    <reaction evidence="1">
        <text>AMP + ATP = 2 ADP</text>
        <dbReference type="Rhea" id="RHEA:12973"/>
        <dbReference type="ChEBI" id="CHEBI:30616"/>
        <dbReference type="ChEBI" id="CHEBI:456215"/>
        <dbReference type="ChEBI" id="CHEBI:456216"/>
        <dbReference type="EC" id="2.7.4.3"/>
    </reaction>
</comment>
<comment type="pathway">
    <text evidence="1">Purine metabolism; AMP biosynthesis via salvage pathway; AMP from ADP: step 1/1.</text>
</comment>
<comment type="subunit">
    <text evidence="1">Monomer.</text>
</comment>
<comment type="subcellular location">
    <subcellularLocation>
        <location evidence="1">Cytoplasm</location>
    </subcellularLocation>
</comment>
<comment type="domain">
    <text evidence="1">Consists of three domains, a large central CORE domain and two small peripheral domains, NMPbind and LID, which undergo movements during catalysis. The LID domain closes over the site of phosphoryl transfer upon ATP binding. Assembling and dissambling the active center during each catalytic cycle provides an effective means to prevent ATP hydrolysis. Some bacteria have evolved a zinc-coordinating structure that stabilizes the LID domain.</text>
</comment>
<comment type="similarity">
    <text evidence="1">Belongs to the adenylate kinase family.</text>
</comment>
<keyword id="KW-0067">ATP-binding</keyword>
<keyword id="KW-0963">Cytoplasm</keyword>
<keyword id="KW-0418">Kinase</keyword>
<keyword id="KW-0479">Metal-binding</keyword>
<keyword id="KW-0545">Nucleotide biosynthesis</keyword>
<keyword id="KW-0547">Nucleotide-binding</keyword>
<keyword id="KW-1185">Reference proteome</keyword>
<keyword id="KW-0808">Transferase</keyword>
<keyword id="KW-0862">Zinc</keyword>
<evidence type="ECO:0000255" key="1">
    <source>
        <dbReference type="HAMAP-Rule" id="MF_00235"/>
    </source>
</evidence>
<feature type="chain" id="PRO_1000021770" description="Adenylate kinase">
    <location>
        <begin position="1"/>
        <end position="215"/>
    </location>
</feature>
<feature type="region of interest" description="NMP" evidence="1">
    <location>
        <begin position="30"/>
        <end position="59"/>
    </location>
</feature>
<feature type="region of interest" description="LID" evidence="1">
    <location>
        <begin position="126"/>
        <end position="163"/>
    </location>
</feature>
<feature type="binding site" evidence="1">
    <location>
        <begin position="10"/>
        <end position="15"/>
    </location>
    <ligand>
        <name>ATP</name>
        <dbReference type="ChEBI" id="CHEBI:30616"/>
    </ligand>
</feature>
<feature type="binding site" evidence="1">
    <location>
        <position position="31"/>
    </location>
    <ligand>
        <name>AMP</name>
        <dbReference type="ChEBI" id="CHEBI:456215"/>
    </ligand>
</feature>
<feature type="binding site" evidence="1">
    <location>
        <position position="36"/>
    </location>
    <ligand>
        <name>AMP</name>
        <dbReference type="ChEBI" id="CHEBI:456215"/>
    </ligand>
</feature>
<feature type="binding site" evidence="1">
    <location>
        <begin position="57"/>
        <end position="59"/>
    </location>
    <ligand>
        <name>AMP</name>
        <dbReference type="ChEBI" id="CHEBI:456215"/>
    </ligand>
</feature>
<feature type="binding site" evidence="1">
    <location>
        <begin position="85"/>
        <end position="88"/>
    </location>
    <ligand>
        <name>AMP</name>
        <dbReference type="ChEBI" id="CHEBI:456215"/>
    </ligand>
</feature>
<feature type="binding site" evidence="1">
    <location>
        <position position="92"/>
    </location>
    <ligand>
        <name>AMP</name>
        <dbReference type="ChEBI" id="CHEBI:456215"/>
    </ligand>
</feature>
<feature type="binding site" evidence="1">
    <location>
        <position position="127"/>
    </location>
    <ligand>
        <name>ATP</name>
        <dbReference type="ChEBI" id="CHEBI:30616"/>
    </ligand>
</feature>
<feature type="binding site" evidence="1">
    <location>
        <position position="130"/>
    </location>
    <ligand>
        <name>Zn(2+)</name>
        <dbReference type="ChEBI" id="CHEBI:29105"/>
        <note>structural</note>
    </ligand>
</feature>
<feature type="binding site" evidence="1">
    <location>
        <position position="133"/>
    </location>
    <ligand>
        <name>Zn(2+)</name>
        <dbReference type="ChEBI" id="CHEBI:29105"/>
        <note>structural</note>
    </ligand>
</feature>
<feature type="binding site" evidence="1">
    <location>
        <position position="150"/>
    </location>
    <ligand>
        <name>Zn(2+)</name>
        <dbReference type="ChEBI" id="CHEBI:29105"/>
        <note>structural</note>
    </ligand>
</feature>
<feature type="binding site" evidence="1">
    <location>
        <position position="153"/>
    </location>
    <ligand>
        <name>Zn(2+)</name>
        <dbReference type="ChEBI" id="CHEBI:29105"/>
        <note>structural</note>
    </ligand>
</feature>
<feature type="binding site" evidence="1">
    <location>
        <position position="160"/>
    </location>
    <ligand>
        <name>AMP</name>
        <dbReference type="ChEBI" id="CHEBI:456215"/>
    </ligand>
</feature>
<feature type="binding site" evidence="1">
    <location>
        <position position="172"/>
    </location>
    <ligand>
        <name>AMP</name>
        <dbReference type="ChEBI" id="CHEBI:456215"/>
    </ligand>
</feature>
<feature type="binding site" evidence="1">
    <location>
        <position position="200"/>
    </location>
    <ligand>
        <name>ATP</name>
        <dbReference type="ChEBI" id="CHEBI:30616"/>
    </ligand>
</feature>
<dbReference type="EC" id="2.7.4.3" evidence="1"/>
<dbReference type="EMBL" id="CP000699">
    <property type="protein sequence ID" value="ABQ67697.1"/>
    <property type="molecule type" value="Genomic_DNA"/>
</dbReference>
<dbReference type="SMR" id="A5V5Y1"/>
<dbReference type="STRING" id="392499.Swit_1332"/>
<dbReference type="PaxDb" id="392499-Swit_1332"/>
<dbReference type="KEGG" id="swi:Swit_1332"/>
<dbReference type="eggNOG" id="COG0563">
    <property type="taxonomic scope" value="Bacteria"/>
</dbReference>
<dbReference type="HOGENOM" id="CLU_032354_1_2_5"/>
<dbReference type="OrthoDB" id="9805030at2"/>
<dbReference type="UniPathway" id="UPA00588">
    <property type="reaction ID" value="UER00649"/>
</dbReference>
<dbReference type="Proteomes" id="UP000001989">
    <property type="component" value="Chromosome"/>
</dbReference>
<dbReference type="GO" id="GO:0005737">
    <property type="term" value="C:cytoplasm"/>
    <property type="evidence" value="ECO:0007669"/>
    <property type="project" value="UniProtKB-SubCell"/>
</dbReference>
<dbReference type="GO" id="GO:0004017">
    <property type="term" value="F:adenylate kinase activity"/>
    <property type="evidence" value="ECO:0007669"/>
    <property type="project" value="UniProtKB-UniRule"/>
</dbReference>
<dbReference type="GO" id="GO:0005524">
    <property type="term" value="F:ATP binding"/>
    <property type="evidence" value="ECO:0007669"/>
    <property type="project" value="UniProtKB-UniRule"/>
</dbReference>
<dbReference type="GO" id="GO:0008270">
    <property type="term" value="F:zinc ion binding"/>
    <property type="evidence" value="ECO:0007669"/>
    <property type="project" value="UniProtKB-UniRule"/>
</dbReference>
<dbReference type="GO" id="GO:0044209">
    <property type="term" value="P:AMP salvage"/>
    <property type="evidence" value="ECO:0007669"/>
    <property type="project" value="UniProtKB-UniRule"/>
</dbReference>
<dbReference type="CDD" id="cd01428">
    <property type="entry name" value="ADK"/>
    <property type="match status" value="1"/>
</dbReference>
<dbReference type="FunFam" id="3.40.50.300:FF:000106">
    <property type="entry name" value="Adenylate kinase mitochondrial"/>
    <property type="match status" value="1"/>
</dbReference>
<dbReference type="Gene3D" id="3.40.50.300">
    <property type="entry name" value="P-loop containing nucleotide triphosphate hydrolases"/>
    <property type="match status" value="1"/>
</dbReference>
<dbReference type="HAMAP" id="MF_00235">
    <property type="entry name" value="Adenylate_kinase_Adk"/>
    <property type="match status" value="1"/>
</dbReference>
<dbReference type="InterPro" id="IPR006259">
    <property type="entry name" value="Adenyl_kin_sub"/>
</dbReference>
<dbReference type="InterPro" id="IPR000850">
    <property type="entry name" value="Adenylat/UMP-CMP_kin"/>
</dbReference>
<dbReference type="InterPro" id="IPR033690">
    <property type="entry name" value="Adenylat_kinase_CS"/>
</dbReference>
<dbReference type="InterPro" id="IPR007862">
    <property type="entry name" value="Adenylate_kinase_lid-dom"/>
</dbReference>
<dbReference type="InterPro" id="IPR036193">
    <property type="entry name" value="ADK_active_lid_dom_sf"/>
</dbReference>
<dbReference type="InterPro" id="IPR027417">
    <property type="entry name" value="P-loop_NTPase"/>
</dbReference>
<dbReference type="NCBIfam" id="TIGR01351">
    <property type="entry name" value="adk"/>
    <property type="match status" value="1"/>
</dbReference>
<dbReference type="NCBIfam" id="NF001380">
    <property type="entry name" value="PRK00279.1-2"/>
    <property type="match status" value="1"/>
</dbReference>
<dbReference type="NCBIfam" id="NF001381">
    <property type="entry name" value="PRK00279.1-3"/>
    <property type="match status" value="1"/>
</dbReference>
<dbReference type="NCBIfam" id="NF011100">
    <property type="entry name" value="PRK14527.1"/>
    <property type="match status" value="1"/>
</dbReference>
<dbReference type="NCBIfam" id="NF011105">
    <property type="entry name" value="PRK14532.1"/>
    <property type="match status" value="1"/>
</dbReference>
<dbReference type="PANTHER" id="PTHR23359">
    <property type="entry name" value="NUCLEOTIDE KINASE"/>
    <property type="match status" value="1"/>
</dbReference>
<dbReference type="Pfam" id="PF00406">
    <property type="entry name" value="ADK"/>
    <property type="match status" value="1"/>
</dbReference>
<dbReference type="Pfam" id="PF05191">
    <property type="entry name" value="ADK_lid"/>
    <property type="match status" value="1"/>
</dbReference>
<dbReference type="PRINTS" id="PR00094">
    <property type="entry name" value="ADENYLTKNASE"/>
</dbReference>
<dbReference type="SUPFAM" id="SSF57774">
    <property type="entry name" value="Microbial and mitochondrial ADK, insert 'zinc finger' domain"/>
    <property type="match status" value="1"/>
</dbReference>
<dbReference type="SUPFAM" id="SSF52540">
    <property type="entry name" value="P-loop containing nucleoside triphosphate hydrolases"/>
    <property type="match status" value="1"/>
</dbReference>
<dbReference type="PROSITE" id="PS00113">
    <property type="entry name" value="ADENYLATE_KINASE"/>
    <property type="match status" value="1"/>
</dbReference>
<name>KAD_RHIWR</name>